<reference key="1">
    <citation type="journal article" date="2003" name="Genome Res.">
        <title>Genome sequence of an M3 strain of Streptococcus pyogenes reveals a large-scale genomic rearrangement in invasive strains and new insights into phage evolution.</title>
        <authorList>
            <person name="Nakagawa I."/>
            <person name="Kurokawa K."/>
            <person name="Yamashita A."/>
            <person name="Nakata M."/>
            <person name="Tomiyasu Y."/>
            <person name="Okahashi N."/>
            <person name="Kawabata S."/>
            <person name="Yamazaki K."/>
            <person name="Shiba T."/>
            <person name="Yasunaga T."/>
            <person name="Hayashi H."/>
            <person name="Hattori M."/>
            <person name="Hamada S."/>
        </authorList>
    </citation>
    <scope>NUCLEOTIDE SEQUENCE [LARGE SCALE GENOMIC DNA]</scope>
    <source>
        <strain>SSI-1</strain>
    </source>
</reference>
<proteinExistence type="inferred from homology"/>
<feature type="chain" id="PRO_0000411259" description="Probable ABC transporter ATP-binding protein SPs0214">
    <location>
        <begin position="1"/>
        <end position="256"/>
    </location>
</feature>
<feature type="domain" description="ABC transporter" evidence="2">
    <location>
        <begin position="4"/>
        <end position="246"/>
    </location>
</feature>
<feature type="binding site" evidence="2">
    <location>
        <begin position="36"/>
        <end position="43"/>
    </location>
    <ligand>
        <name>ATP</name>
        <dbReference type="ChEBI" id="CHEBI:30616"/>
    </ligand>
</feature>
<organism>
    <name type="scientific">Streptococcus pyogenes serotype M3 (strain SSI-1)</name>
    <dbReference type="NCBI Taxonomy" id="193567"/>
    <lineage>
        <taxon>Bacteria</taxon>
        <taxon>Bacillati</taxon>
        <taxon>Bacillota</taxon>
        <taxon>Bacilli</taxon>
        <taxon>Lactobacillales</taxon>
        <taxon>Streptococcaceae</taxon>
        <taxon>Streptococcus</taxon>
    </lineage>
</organism>
<comment type="subcellular location">
    <subcellularLocation>
        <location evidence="1">Cell membrane</location>
        <topology evidence="1">Peripheral membrane protein</topology>
    </subcellularLocation>
</comment>
<comment type="similarity">
    <text evidence="3">Belongs to the ABC transporter superfamily. Ycf16 family.</text>
</comment>
<accession>P0CZ43</accession>
<accession>Q79YI4</accession>
<accession>Q7CFG9</accession>
<sequence length="256" mass="28110">MSILEINNLHVSIEGKEILKGVNLTLKTGEVAAIMGPNGTGKSTLSAAIMGNPNYEVTQGQILLDGVNILDLEVDERARLGLFLAMQYPSEIPGITNAEFMRAAMNAGKADEDKISVRDFITKLDEKMALLGMKEEMAERYLNEGFSGGEKKRNEILQLLMLEPKFALLDEIDSGLDIDALKVVSKGVNEMRGKDFGAMIITHYQRLLNYITPDLVHVMMDGRIVLSGDAALATRLEKEGYAGIAQDLGIEYKEES</sequence>
<evidence type="ECO:0000250" key="1"/>
<evidence type="ECO:0000255" key="2">
    <source>
        <dbReference type="PROSITE-ProRule" id="PRU00434"/>
    </source>
</evidence>
<evidence type="ECO:0000305" key="3"/>
<keyword id="KW-0067">ATP-binding</keyword>
<keyword id="KW-1003">Cell membrane</keyword>
<keyword id="KW-0472">Membrane</keyword>
<keyword id="KW-0547">Nucleotide-binding</keyword>
<keyword id="KW-0813">Transport</keyword>
<gene>
    <name type="ordered locus">SPs0214</name>
</gene>
<protein>
    <recommendedName>
        <fullName>Probable ABC transporter ATP-binding protein SPs0214</fullName>
    </recommendedName>
</protein>
<dbReference type="EMBL" id="BA000034">
    <property type="protein sequence ID" value="BAC63309.1"/>
    <property type="molecule type" value="Genomic_DNA"/>
</dbReference>
<dbReference type="SMR" id="P0CZ43"/>
<dbReference type="KEGG" id="sps:SPs0214"/>
<dbReference type="HOGENOM" id="CLU_000604_48_1_9"/>
<dbReference type="GO" id="GO:0005886">
    <property type="term" value="C:plasma membrane"/>
    <property type="evidence" value="ECO:0007669"/>
    <property type="project" value="UniProtKB-SubCell"/>
</dbReference>
<dbReference type="GO" id="GO:0005524">
    <property type="term" value="F:ATP binding"/>
    <property type="evidence" value="ECO:0007669"/>
    <property type="project" value="UniProtKB-KW"/>
</dbReference>
<dbReference type="GO" id="GO:0016887">
    <property type="term" value="F:ATP hydrolysis activity"/>
    <property type="evidence" value="ECO:0007669"/>
    <property type="project" value="InterPro"/>
</dbReference>
<dbReference type="CDD" id="cd03217">
    <property type="entry name" value="ABC_FeS_Assembly"/>
    <property type="match status" value="1"/>
</dbReference>
<dbReference type="Gene3D" id="3.40.50.300">
    <property type="entry name" value="P-loop containing nucleotide triphosphate hydrolases"/>
    <property type="match status" value="1"/>
</dbReference>
<dbReference type="InterPro" id="IPR003593">
    <property type="entry name" value="AAA+_ATPase"/>
</dbReference>
<dbReference type="InterPro" id="IPR003439">
    <property type="entry name" value="ABC_transporter-like_ATP-bd"/>
</dbReference>
<dbReference type="InterPro" id="IPR017871">
    <property type="entry name" value="ABC_transporter-like_CS"/>
</dbReference>
<dbReference type="InterPro" id="IPR010230">
    <property type="entry name" value="FeS-cluster_ATPase_SufC"/>
</dbReference>
<dbReference type="InterPro" id="IPR027417">
    <property type="entry name" value="P-loop_NTPase"/>
</dbReference>
<dbReference type="NCBIfam" id="TIGR01978">
    <property type="entry name" value="sufC"/>
    <property type="match status" value="1"/>
</dbReference>
<dbReference type="PANTHER" id="PTHR43204">
    <property type="entry name" value="ABC TRANSPORTER I FAMILY MEMBER 6, CHLOROPLASTIC"/>
    <property type="match status" value="1"/>
</dbReference>
<dbReference type="PANTHER" id="PTHR43204:SF1">
    <property type="entry name" value="ABC TRANSPORTER I FAMILY MEMBER 6, CHLOROPLASTIC"/>
    <property type="match status" value="1"/>
</dbReference>
<dbReference type="Pfam" id="PF00005">
    <property type="entry name" value="ABC_tran"/>
    <property type="match status" value="1"/>
</dbReference>
<dbReference type="SMART" id="SM00382">
    <property type="entry name" value="AAA"/>
    <property type="match status" value="1"/>
</dbReference>
<dbReference type="SUPFAM" id="SSF52540">
    <property type="entry name" value="P-loop containing nucleoside triphosphate hydrolases"/>
    <property type="match status" value="1"/>
</dbReference>
<dbReference type="PROSITE" id="PS00211">
    <property type="entry name" value="ABC_TRANSPORTER_1"/>
    <property type="match status" value="1"/>
</dbReference>
<dbReference type="PROSITE" id="PS50893">
    <property type="entry name" value="ABC_TRANSPORTER_2"/>
    <property type="match status" value="1"/>
</dbReference>
<name>Y208_STRPQ</name>